<organism>
    <name type="scientific">Potato leafroll virus (strain Potato/Scotland/strain 1/1984)</name>
    <name type="common">PLrV</name>
    <dbReference type="NCBI Taxonomy" id="12046"/>
    <lineage>
        <taxon>Viruses</taxon>
        <taxon>Riboviria</taxon>
        <taxon>Orthornavirae</taxon>
        <taxon>Pisuviricota</taxon>
        <taxon>Pisoniviricetes</taxon>
        <taxon>Sobelivirales</taxon>
        <taxon>Solemoviridae</taxon>
        <taxon>Polerovirus</taxon>
        <taxon>Potato leafroll virus</taxon>
    </lineage>
</organism>
<accession>P0C768</accession>
<comment type="function">
    <text evidence="1">Involved in viral RNA replication.</text>
</comment>
<protein>
    <recommendedName>
        <fullName>Replication-associated protein</fullName>
        <shortName>Rap1</shortName>
    </recommendedName>
</protein>
<sequence length="41" mass="5266">MTPMRITVWRERLQQMRPQRKLLKQTQQRRLLHQLQQRKLL</sequence>
<name>RAP1_PLRV1</name>
<proteinExistence type="predicted"/>
<organismHost>
    <name type="scientific">Solanum tuberosum</name>
    <name type="common">Potato</name>
    <dbReference type="NCBI Taxonomy" id="4113"/>
</organismHost>
<reference key="1">
    <citation type="journal article" date="1989" name="J. Gen. Virol.">
        <title>Nucleotide sequence of potato leafroll luteovirus RNA.</title>
        <authorList>
            <person name="Mayo M.A."/>
            <person name="Robinson D.J."/>
            <person name="Jolly C.A."/>
            <person name="Hyman L."/>
        </authorList>
    </citation>
    <scope>NUCLEOTIDE SEQUENCE [GENOMIC RNA]</scope>
</reference>
<reference key="2">
    <citation type="journal article" date="2003" name="Proc. Natl. Acad. Sci. U.S.A.">
        <title>An unusual internal ribosomal entry site of inverted symmetry directs expression of a potato leafroll polerovirus replication-associated protein.</title>
        <authorList>
            <person name="Jaag H.M."/>
            <person name="Kawchuk L."/>
            <person name="Rohde W."/>
            <person name="Fischer R."/>
            <person name="Emans N."/>
            <person name="Pruefer D."/>
        </authorList>
    </citation>
    <scope>IDENTIFICATION</scope>
    <scope>FUNCTION</scope>
</reference>
<evidence type="ECO:0000269" key="1">
    <source>
    </source>
</evidence>
<dbReference type="EMBL" id="D00530">
    <property type="status" value="NOT_ANNOTATED_CDS"/>
    <property type="molecule type" value="Genomic_RNA"/>
</dbReference>
<dbReference type="SMR" id="P0C768"/>
<dbReference type="Proteomes" id="UP000006723">
    <property type="component" value="Segment"/>
</dbReference>
<feature type="chain" id="PRO_0000390912" description="Replication-associated protein">
    <location>
        <begin position="1"/>
        <end position="41"/>
    </location>
</feature>
<keyword id="KW-1185">Reference proteome</keyword>